<evidence type="ECO:0000250" key="1">
    <source>
        <dbReference type="UniProtKB" id="P02144"/>
    </source>
</evidence>
<evidence type="ECO:0000250" key="2">
    <source>
        <dbReference type="UniProtKB" id="P02185"/>
    </source>
</evidence>
<evidence type="ECO:0000250" key="3">
    <source>
        <dbReference type="UniProtKB" id="P02189"/>
    </source>
</evidence>
<evidence type="ECO:0000250" key="4">
    <source>
        <dbReference type="UniProtKB" id="P68082"/>
    </source>
</evidence>
<evidence type="ECO:0000255" key="5">
    <source>
        <dbReference type="PROSITE-ProRule" id="PRU00238"/>
    </source>
</evidence>
<reference key="1">
    <citation type="journal article" date="1980" name="Biochim. Biophys. Acta">
        <title>The amino acid sequence of alligator (Alligator mississippiensis) myoglobin. Phylogenetic implications.</title>
        <authorList>
            <person name="Dene H."/>
            <person name="Sazy J."/>
            <person name="Goodman M."/>
            <person name="Romero-Herrera A.E."/>
        </authorList>
    </citation>
    <scope>PROTEIN SEQUENCE</scope>
</reference>
<protein>
    <recommendedName>
        <fullName>Myoglobin</fullName>
    </recommendedName>
    <alternativeName>
        <fullName evidence="1">Nitrite reductase MB</fullName>
        <ecNumber evidence="1">1.7.-.-</ecNumber>
    </alternativeName>
    <alternativeName>
        <fullName evidence="1">Pseudoperoxidase MB</fullName>
        <ecNumber evidence="1">1.11.1.-</ecNumber>
    </alternativeName>
</protein>
<gene>
    <name type="primary">MB</name>
</gene>
<sequence length="154" mass="17874">MELSDQEWKHVLDIWTKVESKLPEHGHEVIIRLLQEHPETQERFEKFKHMKTADEMKSSEKMKQHGNTVFTALGNILKQKGNHAEVLKPLAKSHALEHKIPVKYLEFISEIIVKVIAEKYPADFGADSQAAMRKALELFRNDMASKYKEFGYQG</sequence>
<accession>P02200</accession>
<keyword id="KW-0963">Cytoplasm</keyword>
<keyword id="KW-0903">Direct protein sequencing</keyword>
<keyword id="KW-0349">Heme</keyword>
<keyword id="KW-0408">Iron</keyword>
<keyword id="KW-0479">Metal-binding</keyword>
<keyword id="KW-0514">Muscle protein</keyword>
<keyword id="KW-0560">Oxidoreductase</keyword>
<keyword id="KW-0561">Oxygen transport</keyword>
<keyword id="KW-0813">Transport</keyword>
<feature type="chain" id="PRO_0000053379" description="Myoglobin">
    <location>
        <begin position="1"/>
        <end position="154"/>
    </location>
</feature>
<feature type="domain" description="Globin" evidence="5">
    <location>
        <begin position="2"/>
        <end position="148"/>
    </location>
</feature>
<feature type="binding site" evidence="4">
    <location>
        <position position="65"/>
    </location>
    <ligand>
        <name>nitrite</name>
        <dbReference type="ChEBI" id="CHEBI:16301"/>
    </ligand>
</feature>
<feature type="binding site" evidence="3 5">
    <location>
        <position position="65"/>
    </location>
    <ligand>
        <name>O2</name>
        <dbReference type="ChEBI" id="CHEBI:15379"/>
    </ligand>
</feature>
<feature type="binding site" description="proximal binding residue" evidence="1">
    <location>
        <position position="94"/>
    </location>
    <ligand>
        <name>heme b</name>
        <dbReference type="ChEBI" id="CHEBI:60344"/>
    </ligand>
    <ligandPart>
        <name>Fe</name>
        <dbReference type="ChEBI" id="CHEBI:18248"/>
    </ligandPart>
</feature>
<name>MYG_ALLMI</name>
<organism>
    <name type="scientific">Alligator mississippiensis</name>
    <name type="common">American alligator</name>
    <dbReference type="NCBI Taxonomy" id="8496"/>
    <lineage>
        <taxon>Eukaryota</taxon>
        <taxon>Metazoa</taxon>
        <taxon>Chordata</taxon>
        <taxon>Craniata</taxon>
        <taxon>Vertebrata</taxon>
        <taxon>Euteleostomi</taxon>
        <taxon>Archelosauria</taxon>
        <taxon>Archosauria</taxon>
        <taxon>Crocodylia</taxon>
        <taxon>Alligatoridae</taxon>
        <taxon>Alligatorinae</taxon>
        <taxon>Alligator</taxon>
    </lineage>
</organism>
<comment type="function">
    <text evidence="1">Monomeric heme protein which primary function is to store oxygen and facilitate its diffusion within muscle tissues. Reversibly binds oxygen through a pentacoordinated heme iron and enables its timely and efficient release as needed during periods of heightened demand. Depending on the oxidative conditions of tissues and cells, and in addition to its ability to bind oxygen, it also has a nitrite reductase activity whereby it regulates the production of bioactive nitric oxide. Under stress conditions, like hypoxia and anoxia, it also protects cells against reactive oxygen species thanks to its pseudoperoxidase activity.</text>
</comment>
<comment type="catalytic activity">
    <reaction evidence="1">
        <text>Fe(III)-heme b-[protein] + nitric oxide + H2O = Fe(II)-heme b-[protein] + nitrite + 2 H(+)</text>
        <dbReference type="Rhea" id="RHEA:77711"/>
        <dbReference type="Rhea" id="RHEA-COMP:18975"/>
        <dbReference type="Rhea" id="RHEA-COMP:18976"/>
        <dbReference type="ChEBI" id="CHEBI:15377"/>
        <dbReference type="ChEBI" id="CHEBI:15378"/>
        <dbReference type="ChEBI" id="CHEBI:16301"/>
        <dbReference type="ChEBI" id="CHEBI:16480"/>
        <dbReference type="ChEBI" id="CHEBI:55376"/>
        <dbReference type="ChEBI" id="CHEBI:60344"/>
    </reaction>
    <physiologicalReaction direction="right-to-left" evidence="1">
        <dbReference type="Rhea" id="RHEA:77713"/>
    </physiologicalReaction>
</comment>
<comment type="catalytic activity">
    <reaction evidence="1">
        <text>H2O2 + AH2 = A + 2 H2O</text>
        <dbReference type="Rhea" id="RHEA:30275"/>
        <dbReference type="ChEBI" id="CHEBI:13193"/>
        <dbReference type="ChEBI" id="CHEBI:15377"/>
        <dbReference type="ChEBI" id="CHEBI:16240"/>
        <dbReference type="ChEBI" id="CHEBI:17499"/>
    </reaction>
</comment>
<comment type="subunit">
    <text evidence="2">Monomeric.</text>
</comment>
<comment type="subcellular location">
    <subcellularLocation>
        <location evidence="1">Cytoplasm</location>
        <location evidence="1">Sarcoplasm</location>
    </subcellularLocation>
</comment>
<comment type="similarity">
    <text evidence="5">Belongs to the globin family.</text>
</comment>
<dbReference type="EC" id="1.7.-.-" evidence="1"/>
<dbReference type="EC" id="1.11.1.-" evidence="1"/>
<dbReference type="PIR" id="A02521">
    <property type="entry name" value="MYAQ"/>
</dbReference>
<dbReference type="SMR" id="P02200"/>
<dbReference type="eggNOG" id="KOG3378">
    <property type="taxonomic scope" value="Eukaryota"/>
</dbReference>
<dbReference type="GO" id="GO:0070062">
    <property type="term" value="C:extracellular exosome"/>
    <property type="evidence" value="ECO:0007669"/>
    <property type="project" value="TreeGrafter"/>
</dbReference>
<dbReference type="GO" id="GO:0016528">
    <property type="term" value="C:sarcoplasm"/>
    <property type="evidence" value="ECO:0000250"/>
    <property type="project" value="UniProtKB"/>
</dbReference>
<dbReference type="GO" id="GO:0020037">
    <property type="term" value="F:heme binding"/>
    <property type="evidence" value="ECO:0007669"/>
    <property type="project" value="InterPro"/>
</dbReference>
<dbReference type="GO" id="GO:0046872">
    <property type="term" value="F:metal ion binding"/>
    <property type="evidence" value="ECO:0007669"/>
    <property type="project" value="UniProtKB-KW"/>
</dbReference>
<dbReference type="GO" id="GO:0098809">
    <property type="term" value="F:nitrite reductase activity"/>
    <property type="evidence" value="ECO:0000250"/>
    <property type="project" value="UniProtKB"/>
</dbReference>
<dbReference type="GO" id="GO:0019825">
    <property type="term" value="F:oxygen binding"/>
    <property type="evidence" value="ECO:0007669"/>
    <property type="project" value="InterPro"/>
</dbReference>
<dbReference type="GO" id="GO:0005344">
    <property type="term" value="F:oxygen carrier activity"/>
    <property type="evidence" value="ECO:0000250"/>
    <property type="project" value="UniProtKB"/>
</dbReference>
<dbReference type="GO" id="GO:0004601">
    <property type="term" value="F:peroxidase activity"/>
    <property type="evidence" value="ECO:0000250"/>
    <property type="project" value="UniProtKB"/>
</dbReference>
<dbReference type="GO" id="GO:0019430">
    <property type="term" value="P:removal of superoxide radicals"/>
    <property type="evidence" value="ECO:0000250"/>
    <property type="project" value="UniProtKB"/>
</dbReference>
<dbReference type="Gene3D" id="6.10.140.2100">
    <property type="match status" value="1"/>
</dbReference>
<dbReference type="Gene3D" id="6.10.140.2110">
    <property type="match status" value="1"/>
</dbReference>
<dbReference type="InterPro" id="IPR000971">
    <property type="entry name" value="Globin"/>
</dbReference>
<dbReference type="InterPro" id="IPR009050">
    <property type="entry name" value="Globin-like_sf"/>
</dbReference>
<dbReference type="InterPro" id="IPR002335">
    <property type="entry name" value="Myoglobin"/>
</dbReference>
<dbReference type="PANTHER" id="PTHR47132">
    <property type="entry name" value="MYOGLOBIN"/>
    <property type="match status" value="1"/>
</dbReference>
<dbReference type="PANTHER" id="PTHR47132:SF1">
    <property type="entry name" value="MYOGLOBIN"/>
    <property type="match status" value="1"/>
</dbReference>
<dbReference type="Pfam" id="PF00042">
    <property type="entry name" value="Globin"/>
    <property type="match status" value="1"/>
</dbReference>
<dbReference type="PRINTS" id="PR00613">
    <property type="entry name" value="MYOGLOBIN"/>
</dbReference>
<dbReference type="SUPFAM" id="SSF46458">
    <property type="entry name" value="Globin-like"/>
    <property type="match status" value="1"/>
</dbReference>
<dbReference type="PROSITE" id="PS01033">
    <property type="entry name" value="GLOBIN"/>
    <property type="match status" value="1"/>
</dbReference>
<proteinExistence type="evidence at protein level"/>